<feature type="chain" id="PRO_0000250666" description="ABC transporter E family member 3">
    <location>
        <begin position="1"/>
        <end position="181"/>
    </location>
</feature>
<feature type="domain" description="ABC transporter">
    <location>
        <begin position="20"/>
        <end position="176"/>
    </location>
</feature>
<feature type="binding site" evidence="1">
    <location>
        <begin position="27"/>
        <end position="34"/>
    </location>
    <ligand>
        <name>ATP</name>
        <dbReference type="ChEBI" id="CHEBI:30616"/>
    </ligand>
</feature>
<sequence>MTITRGDFKLRLNQGEFTDSQIIVMLGENGTGKTTFIKMLAGSKLDIDEEGSQVHEIPQFSVSYKNQHMSNRKFEITVRDLIHRKIPNAYAEHQFVSDVMKPLKIEELMDKSFNKLSGGEKQRVALALCLGKSADIYLIDEPSAFLDSEQRIIASKVIKRFILQMKKAAFARFHNGYVFGR</sequence>
<comment type="tissue specificity">
    <text evidence="2">Mostly expressed in roots and leaves, and, to a lower extent, in stems, flowers and siliques.</text>
</comment>
<comment type="similarity">
    <text evidence="3">Belongs to the ABC transporter superfamily. ABCE family.</text>
</comment>
<accession>Q9M0D0</accession>
<dbReference type="EMBL" id="AL161576">
    <property type="protein sequence ID" value="CAB81023.1"/>
    <property type="molecule type" value="Genomic_DNA"/>
</dbReference>
<dbReference type="EMBL" id="CP002687">
    <property type="protein sequence ID" value="AEE85748.1"/>
    <property type="molecule type" value="Genomic_DNA"/>
</dbReference>
<dbReference type="EMBL" id="DQ056666">
    <property type="protein sequence ID" value="AAY78813.1"/>
    <property type="molecule type" value="mRNA"/>
</dbReference>
<dbReference type="PIR" id="C85354">
    <property type="entry name" value="C85354"/>
</dbReference>
<dbReference type="RefSeq" id="NP_194759.1">
    <property type="nucleotide sequence ID" value="NM_119176.1"/>
</dbReference>
<dbReference type="SMR" id="Q9M0D0"/>
<dbReference type="STRING" id="3702.Q9M0D0"/>
<dbReference type="PaxDb" id="3702-AT4G30300.1"/>
<dbReference type="EnsemblPlants" id="AT4G30300.1">
    <property type="protein sequence ID" value="AT4G30300.1"/>
    <property type="gene ID" value="AT4G30300"/>
</dbReference>
<dbReference type="GeneID" id="829153"/>
<dbReference type="Gramene" id="AT4G30300.1">
    <property type="protein sequence ID" value="AT4G30300.1"/>
    <property type="gene ID" value="AT4G30300"/>
</dbReference>
<dbReference type="KEGG" id="ath:AT4G30300"/>
<dbReference type="Araport" id="AT4G30300"/>
<dbReference type="TAIR" id="AT4G30300">
    <property type="gene designation" value="ABCE3"/>
</dbReference>
<dbReference type="eggNOG" id="KOG0063">
    <property type="taxonomic scope" value="Eukaryota"/>
</dbReference>
<dbReference type="HOGENOM" id="CLU_017344_2_0_1"/>
<dbReference type="InParanoid" id="Q9M0D0"/>
<dbReference type="OMA" id="FARFHNG"/>
<dbReference type="OrthoDB" id="1590768at2759"/>
<dbReference type="PhylomeDB" id="Q9M0D0"/>
<dbReference type="PRO" id="PR:Q9M0D0"/>
<dbReference type="Proteomes" id="UP000006548">
    <property type="component" value="Chromosome 4"/>
</dbReference>
<dbReference type="ExpressionAtlas" id="Q9M0D0">
    <property type="expression patterns" value="baseline and differential"/>
</dbReference>
<dbReference type="GO" id="GO:0005524">
    <property type="term" value="F:ATP binding"/>
    <property type="evidence" value="ECO:0007669"/>
    <property type="project" value="UniProtKB-KW"/>
</dbReference>
<dbReference type="GO" id="GO:0016887">
    <property type="term" value="F:ATP hydrolysis activity"/>
    <property type="evidence" value="ECO:0007669"/>
    <property type="project" value="InterPro"/>
</dbReference>
<dbReference type="Gene3D" id="3.40.50.300">
    <property type="entry name" value="P-loop containing nucleotide triphosphate hydrolases"/>
    <property type="match status" value="1"/>
</dbReference>
<dbReference type="InterPro" id="IPR003593">
    <property type="entry name" value="AAA+_ATPase"/>
</dbReference>
<dbReference type="InterPro" id="IPR003439">
    <property type="entry name" value="ABC_transporter-like_ATP-bd"/>
</dbReference>
<dbReference type="InterPro" id="IPR027417">
    <property type="entry name" value="P-loop_NTPase"/>
</dbReference>
<dbReference type="InterPro" id="IPR013283">
    <property type="entry name" value="RLI1"/>
</dbReference>
<dbReference type="PANTHER" id="PTHR19248">
    <property type="entry name" value="ATP-BINDING TRANSPORT PROTEIN-RELATED"/>
    <property type="match status" value="1"/>
</dbReference>
<dbReference type="Pfam" id="PF00005">
    <property type="entry name" value="ABC_tran"/>
    <property type="match status" value="1"/>
</dbReference>
<dbReference type="SMART" id="SM00382">
    <property type="entry name" value="AAA"/>
    <property type="match status" value="1"/>
</dbReference>
<dbReference type="SUPFAM" id="SSF52540">
    <property type="entry name" value="P-loop containing nucleoside triphosphate hydrolases"/>
    <property type="match status" value="1"/>
</dbReference>
<dbReference type="PROSITE" id="PS00211">
    <property type="entry name" value="ABC_TRANSPORTER_1"/>
    <property type="match status" value="1"/>
</dbReference>
<reference key="1">
    <citation type="journal article" date="1999" name="Nature">
        <title>Sequence and analysis of chromosome 4 of the plant Arabidopsis thaliana.</title>
        <authorList>
            <person name="Mayer K.F.X."/>
            <person name="Schueller C."/>
            <person name="Wambutt R."/>
            <person name="Murphy G."/>
            <person name="Volckaert G."/>
            <person name="Pohl T."/>
            <person name="Duesterhoeft A."/>
            <person name="Stiekema W."/>
            <person name="Entian K.-D."/>
            <person name="Terryn N."/>
            <person name="Harris B."/>
            <person name="Ansorge W."/>
            <person name="Brandt P."/>
            <person name="Grivell L.A."/>
            <person name="Rieger M."/>
            <person name="Weichselgartner M."/>
            <person name="de Simone V."/>
            <person name="Obermaier B."/>
            <person name="Mache R."/>
            <person name="Mueller M."/>
            <person name="Kreis M."/>
            <person name="Delseny M."/>
            <person name="Puigdomenech P."/>
            <person name="Watson M."/>
            <person name="Schmidtheini T."/>
            <person name="Reichert B."/>
            <person name="Portetelle D."/>
            <person name="Perez-Alonso M."/>
            <person name="Boutry M."/>
            <person name="Bancroft I."/>
            <person name="Vos P."/>
            <person name="Hoheisel J."/>
            <person name="Zimmermann W."/>
            <person name="Wedler H."/>
            <person name="Ridley P."/>
            <person name="Langham S.-A."/>
            <person name="McCullagh B."/>
            <person name="Bilham L."/>
            <person name="Robben J."/>
            <person name="van der Schueren J."/>
            <person name="Grymonprez B."/>
            <person name="Chuang Y.-J."/>
            <person name="Vandenbussche F."/>
            <person name="Braeken M."/>
            <person name="Weltjens I."/>
            <person name="Voet M."/>
            <person name="Bastiaens I."/>
            <person name="Aert R."/>
            <person name="Defoor E."/>
            <person name="Weitzenegger T."/>
            <person name="Bothe G."/>
            <person name="Ramsperger U."/>
            <person name="Hilbert H."/>
            <person name="Braun M."/>
            <person name="Holzer E."/>
            <person name="Brandt A."/>
            <person name="Peters S."/>
            <person name="van Staveren M."/>
            <person name="Dirkse W."/>
            <person name="Mooijman P."/>
            <person name="Klein Lankhorst R."/>
            <person name="Rose M."/>
            <person name="Hauf J."/>
            <person name="Koetter P."/>
            <person name="Berneiser S."/>
            <person name="Hempel S."/>
            <person name="Feldpausch M."/>
            <person name="Lamberth S."/>
            <person name="Van den Daele H."/>
            <person name="De Keyser A."/>
            <person name="Buysshaert C."/>
            <person name="Gielen J."/>
            <person name="Villarroel R."/>
            <person name="De Clercq R."/>
            <person name="van Montagu M."/>
            <person name="Rogers J."/>
            <person name="Cronin A."/>
            <person name="Quail M.A."/>
            <person name="Bray-Allen S."/>
            <person name="Clark L."/>
            <person name="Doggett J."/>
            <person name="Hall S."/>
            <person name="Kay M."/>
            <person name="Lennard N."/>
            <person name="McLay K."/>
            <person name="Mayes R."/>
            <person name="Pettett A."/>
            <person name="Rajandream M.A."/>
            <person name="Lyne M."/>
            <person name="Benes V."/>
            <person name="Rechmann S."/>
            <person name="Borkova D."/>
            <person name="Bloecker H."/>
            <person name="Scharfe M."/>
            <person name="Grimm M."/>
            <person name="Loehnert T.-H."/>
            <person name="Dose S."/>
            <person name="de Haan M."/>
            <person name="Maarse A.C."/>
            <person name="Schaefer M."/>
            <person name="Mueller-Auer S."/>
            <person name="Gabel C."/>
            <person name="Fuchs M."/>
            <person name="Fartmann B."/>
            <person name="Granderath K."/>
            <person name="Dauner D."/>
            <person name="Herzl A."/>
            <person name="Neumann S."/>
            <person name="Argiriou A."/>
            <person name="Vitale D."/>
            <person name="Liguori R."/>
            <person name="Piravandi E."/>
            <person name="Massenet O."/>
            <person name="Quigley F."/>
            <person name="Clabauld G."/>
            <person name="Muendlein A."/>
            <person name="Felber R."/>
            <person name="Schnabl S."/>
            <person name="Hiller R."/>
            <person name="Schmidt W."/>
            <person name="Lecharny A."/>
            <person name="Aubourg S."/>
            <person name="Chefdor F."/>
            <person name="Cooke R."/>
            <person name="Berger C."/>
            <person name="Monfort A."/>
            <person name="Casacuberta E."/>
            <person name="Gibbons T."/>
            <person name="Weber N."/>
            <person name="Vandenbol M."/>
            <person name="Bargues M."/>
            <person name="Terol J."/>
            <person name="Torres A."/>
            <person name="Perez-Perez A."/>
            <person name="Purnelle B."/>
            <person name="Bent E."/>
            <person name="Johnson S."/>
            <person name="Tacon D."/>
            <person name="Jesse T."/>
            <person name="Heijnen L."/>
            <person name="Schwarz S."/>
            <person name="Scholler P."/>
            <person name="Heber S."/>
            <person name="Francs P."/>
            <person name="Bielke C."/>
            <person name="Frishman D."/>
            <person name="Haase D."/>
            <person name="Lemcke K."/>
            <person name="Mewes H.-W."/>
            <person name="Stocker S."/>
            <person name="Zaccaria P."/>
            <person name="Bevan M."/>
            <person name="Wilson R.K."/>
            <person name="de la Bastide M."/>
            <person name="Habermann K."/>
            <person name="Parnell L."/>
            <person name="Dedhia N."/>
            <person name="Gnoj L."/>
            <person name="Schutz K."/>
            <person name="Huang E."/>
            <person name="Spiegel L."/>
            <person name="Sekhon M."/>
            <person name="Murray J."/>
            <person name="Sheet P."/>
            <person name="Cordes M."/>
            <person name="Abu-Threideh J."/>
            <person name="Stoneking T."/>
            <person name="Kalicki J."/>
            <person name="Graves T."/>
            <person name="Harmon G."/>
            <person name="Edwards J."/>
            <person name="Latreille P."/>
            <person name="Courtney L."/>
            <person name="Cloud J."/>
            <person name="Abbott A."/>
            <person name="Scott K."/>
            <person name="Johnson D."/>
            <person name="Minx P."/>
            <person name="Bentley D."/>
            <person name="Fulton B."/>
            <person name="Miller N."/>
            <person name="Greco T."/>
            <person name="Kemp K."/>
            <person name="Kramer J."/>
            <person name="Fulton L."/>
            <person name="Mardis E."/>
            <person name="Dante M."/>
            <person name="Pepin K."/>
            <person name="Hillier L.W."/>
            <person name="Nelson J."/>
            <person name="Spieth J."/>
            <person name="Ryan E."/>
            <person name="Andrews S."/>
            <person name="Geisel C."/>
            <person name="Layman D."/>
            <person name="Du H."/>
            <person name="Ali J."/>
            <person name="Berghoff A."/>
            <person name="Jones K."/>
            <person name="Drone K."/>
            <person name="Cotton M."/>
            <person name="Joshu C."/>
            <person name="Antonoiu B."/>
            <person name="Zidanic M."/>
            <person name="Strong C."/>
            <person name="Sun H."/>
            <person name="Lamar B."/>
            <person name="Yordan C."/>
            <person name="Ma P."/>
            <person name="Zhong J."/>
            <person name="Preston R."/>
            <person name="Vil D."/>
            <person name="Shekher M."/>
            <person name="Matero A."/>
            <person name="Shah R."/>
            <person name="Swaby I.K."/>
            <person name="O'Shaughnessy A."/>
            <person name="Rodriguez M."/>
            <person name="Hoffman J."/>
            <person name="Till S."/>
            <person name="Granat S."/>
            <person name="Shohdy N."/>
            <person name="Hasegawa A."/>
            <person name="Hameed A."/>
            <person name="Lodhi M."/>
            <person name="Johnson A."/>
            <person name="Chen E."/>
            <person name="Marra M.A."/>
            <person name="Martienssen R."/>
            <person name="McCombie W.R."/>
        </authorList>
    </citation>
    <scope>NUCLEOTIDE SEQUENCE [LARGE SCALE GENOMIC DNA]</scope>
    <source>
        <strain>cv. Columbia</strain>
    </source>
</reference>
<reference key="2">
    <citation type="journal article" date="2017" name="Plant J.">
        <title>Araport11: a complete reannotation of the Arabidopsis thaliana reference genome.</title>
        <authorList>
            <person name="Cheng C.Y."/>
            <person name="Krishnakumar V."/>
            <person name="Chan A.P."/>
            <person name="Thibaud-Nissen F."/>
            <person name="Schobel S."/>
            <person name="Town C.D."/>
        </authorList>
    </citation>
    <scope>GENOME REANNOTATION</scope>
    <source>
        <strain>cv. Columbia</strain>
    </source>
</reference>
<reference key="3">
    <citation type="submission" date="2005-05" db="EMBL/GenBank/DDBJ databases">
        <authorList>
            <person name="Underwood B.A."/>
            <person name="Xiao Y.-L."/>
            <person name="Moskal W.A. Jr."/>
            <person name="Monaghan E.L."/>
            <person name="Wang W."/>
            <person name="Redman J.C."/>
            <person name="Wu H.C."/>
            <person name="Utterback T."/>
            <person name="Town C.D."/>
        </authorList>
    </citation>
    <scope>NUCLEOTIDE SEQUENCE [LARGE SCALE MRNA]</scope>
    <source>
        <strain>cv. Columbia</strain>
    </source>
</reference>
<reference key="4">
    <citation type="journal article" date="2001" name="J. Biol. Chem.">
        <title>The Arabidopsis thaliana ABC protein superfamily, a complete inventory.</title>
        <authorList>
            <person name="Sanchez-Fernandez R."/>
            <person name="Davies T.G."/>
            <person name="Coleman J.O."/>
            <person name="Rea P.A."/>
        </authorList>
    </citation>
    <scope>GENE FAMILY</scope>
    <scope>NOMENCLATURE</scope>
</reference>
<reference key="5">
    <citation type="journal article" date="2004" name="J. Mol. Evol.">
        <title>A plant orthologue of RNase L inhibitor (RLI) is induced in plants showing RNA interference.</title>
        <authorList>
            <person name="Braz A.S.K."/>
            <person name="Finnegan J."/>
            <person name="Waterhouse P."/>
            <person name="Margis R."/>
        </authorList>
    </citation>
    <scope>TISSUE SPECIFICITY</scope>
</reference>
<reference key="6">
    <citation type="journal article" date="2008" name="Trends Plant Sci.">
        <title>Plant ABC proteins - a unified nomenclature and updated inventory.</title>
        <authorList>
            <person name="Verrier P.J."/>
            <person name="Bird D."/>
            <person name="Burla B."/>
            <person name="Dassa E."/>
            <person name="Forestier C."/>
            <person name="Geisler M."/>
            <person name="Klein M."/>
            <person name="Kolukisaoglu H.U."/>
            <person name="Lee Y."/>
            <person name="Martinoia E."/>
            <person name="Murphy A."/>
            <person name="Rea P.A."/>
            <person name="Samuels L."/>
            <person name="Schulz B."/>
            <person name="Spalding E.J."/>
            <person name="Yazaki K."/>
            <person name="Theodoulou F.L."/>
        </authorList>
    </citation>
    <scope>GENE FAMILY</scope>
    <scope>NOMENCLATURE</scope>
</reference>
<name>AB3E_ARATH</name>
<proteinExistence type="evidence at transcript level"/>
<protein>
    <recommendedName>
        <fullName>ABC transporter E family member 3</fullName>
        <shortName>ABC transporter ABCE.3</shortName>
        <shortName>AtABCE3</shortName>
    </recommendedName>
    <alternativeName>
        <fullName>MRP-related protein 4</fullName>
    </alternativeName>
    <alternativeName>
        <fullName>Non-intrinsic ABC protein 15</fullName>
        <shortName>AtNAP15</shortName>
    </alternativeName>
    <alternativeName>
        <fullName>RNase L inhibitor-like protein 3</fullName>
        <shortName>AthaRLI3</shortName>
    </alternativeName>
</protein>
<evidence type="ECO:0000255" key="1"/>
<evidence type="ECO:0000269" key="2">
    <source>
    </source>
</evidence>
<evidence type="ECO:0000305" key="3"/>
<keyword id="KW-0067">ATP-binding</keyword>
<keyword id="KW-0547">Nucleotide-binding</keyword>
<keyword id="KW-1185">Reference proteome</keyword>
<keyword id="KW-0813">Transport</keyword>
<organism>
    <name type="scientific">Arabidopsis thaliana</name>
    <name type="common">Mouse-ear cress</name>
    <dbReference type="NCBI Taxonomy" id="3702"/>
    <lineage>
        <taxon>Eukaryota</taxon>
        <taxon>Viridiplantae</taxon>
        <taxon>Streptophyta</taxon>
        <taxon>Embryophyta</taxon>
        <taxon>Tracheophyta</taxon>
        <taxon>Spermatophyta</taxon>
        <taxon>Magnoliopsida</taxon>
        <taxon>eudicotyledons</taxon>
        <taxon>Gunneridae</taxon>
        <taxon>Pentapetalae</taxon>
        <taxon>rosids</taxon>
        <taxon>malvids</taxon>
        <taxon>Brassicales</taxon>
        <taxon>Brassicaceae</taxon>
        <taxon>Camelineae</taxon>
        <taxon>Arabidopsis</taxon>
    </lineage>
</organism>
<gene>
    <name type="primary">ABCE3</name>
    <name type="synonym">NAP15</name>
    <name type="synonym">RLI3</name>
    <name type="ordered locus">At4g30300</name>
    <name type="ORF">F17I23.360</name>
</gene>